<protein>
    <recommendedName>
        <fullName evidence="1">Homogentisate 1,2-dioxygenase</fullName>
        <shortName evidence="1">HGDO</shortName>
        <ecNumber evidence="1">1.13.11.5</ecNumber>
    </recommendedName>
    <alternativeName>
        <fullName evidence="1">Homogentisate oxygenase</fullName>
    </alternativeName>
    <alternativeName>
        <fullName evidence="1">Homogentisic acid oxidase</fullName>
    </alternativeName>
    <alternativeName>
        <fullName evidence="1">Homogentisicase</fullName>
    </alternativeName>
</protein>
<dbReference type="EC" id="1.13.11.5" evidence="1"/>
<dbReference type="EMBL" id="AM260480">
    <property type="protein sequence ID" value="CAJ96456.1"/>
    <property type="molecule type" value="Genomic_DNA"/>
</dbReference>
<dbReference type="RefSeq" id="WP_011617392.1">
    <property type="nucleotide sequence ID" value="NC_008314.1"/>
</dbReference>
<dbReference type="SMR" id="Q0K0L8"/>
<dbReference type="STRING" id="381666.H16_B1671"/>
<dbReference type="KEGG" id="reh:H16_B1671"/>
<dbReference type="eggNOG" id="COG3508">
    <property type="taxonomic scope" value="Bacteria"/>
</dbReference>
<dbReference type="HOGENOM" id="CLU_027174_0_0_4"/>
<dbReference type="OrthoDB" id="9811253at2"/>
<dbReference type="UniPathway" id="UPA00139">
    <property type="reaction ID" value="UER00339"/>
</dbReference>
<dbReference type="Proteomes" id="UP000008210">
    <property type="component" value="Chromosome 2"/>
</dbReference>
<dbReference type="GO" id="GO:0005737">
    <property type="term" value="C:cytoplasm"/>
    <property type="evidence" value="ECO:0007669"/>
    <property type="project" value="TreeGrafter"/>
</dbReference>
<dbReference type="GO" id="GO:0004411">
    <property type="term" value="F:homogentisate 1,2-dioxygenase activity"/>
    <property type="evidence" value="ECO:0007669"/>
    <property type="project" value="UniProtKB-UniRule"/>
</dbReference>
<dbReference type="GO" id="GO:0005506">
    <property type="term" value="F:iron ion binding"/>
    <property type="evidence" value="ECO:0007669"/>
    <property type="project" value="UniProtKB-UniRule"/>
</dbReference>
<dbReference type="GO" id="GO:0006559">
    <property type="term" value="P:L-phenylalanine catabolic process"/>
    <property type="evidence" value="ECO:0007669"/>
    <property type="project" value="UniProtKB-UniRule"/>
</dbReference>
<dbReference type="GO" id="GO:0006572">
    <property type="term" value="P:tyrosine catabolic process"/>
    <property type="evidence" value="ECO:0007669"/>
    <property type="project" value="UniProtKB-UniRule"/>
</dbReference>
<dbReference type="CDD" id="cd07000">
    <property type="entry name" value="cupin_HGO_N"/>
    <property type="match status" value="1"/>
</dbReference>
<dbReference type="FunFam" id="2.60.120.10:FF:000034">
    <property type="entry name" value="Homogentisate 1,2-dioxygenase"/>
    <property type="match status" value="1"/>
</dbReference>
<dbReference type="Gene3D" id="2.60.120.10">
    <property type="entry name" value="Jelly Rolls"/>
    <property type="match status" value="1"/>
</dbReference>
<dbReference type="HAMAP" id="MF_00334">
    <property type="entry name" value="Homogentis_dioxygen"/>
    <property type="match status" value="1"/>
</dbReference>
<dbReference type="InterPro" id="IPR046451">
    <property type="entry name" value="HgmA_C"/>
</dbReference>
<dbReference type="InterPro" id="IPR046452">
    <property type="entry name" value="HgmA_N"/>
</dbReference>
<dbReference type="InterPro" id="IPR005708">
    <property type="entry name" value="Homogentis_dOase"/>
</dbReference>
<dbReference type="InterPro" id="IPR022950">
    <property type="entry name" value="Homogentis_dOase_bac"/>
</dbReference>
<dbReference type="InterPro" id="IPR014710">
    <property type="entry name" value="RmlC-like_jellyroll"/>
</dbReference>
<dbReference type="InterPro" id="IPR011051">
    <property type="entry name" value="RmlC_Cupin_sf"/>
</dbReference>
<dbReference type="NCBIfam" id="TIGR01015">
    <property type="entry name" value="hmgA"/>
    <property type="match status" value="1"/>
</dbReference>
<dbReference type="PANTHER" id="PTHR11056">
    <property type="entry name" value="HOMOGENTISATE 1,2-DIOXYGENASE"/>
    <property type="match status" value="1"/>
</dbReference>
<dbReference type="PANTHER" id="PTHR11056:SF0">
    <property type="entry name" value="HOMOGENTISATE 1,2-DIOXYGENASE"/>
    <property type="match status" value="1"/>
</dbReference>
<dbReference type="Pfam" id="PF04209">
    <property type="entry name" value="HgmA_C"/>
    <property type="match status" value="1"/>
</dbReference>
<dbReference type="Pfam" id="PF20510">
    <property type="entry name" value="HgmA_N"/>
    <property type="match status" value="1"/>
</dbReference>
<dbReference type="SUPFAM" id="SSF51182">
    <property type="entry name" value="RmlC-like cupins"/>
    <property type="match status" value="1"/>
</dbReference>
<comment type="function">
    <text evidence="1">Involved in the catabolism of homogentisate (2,5-dihydroxyphenylacetate or 2,5-OH-PhAc), a central intermediate in the degradation of phenylalanine and tyrosine. Catalyzes the oxidative ring cleavage of the aromatic ring of homogentisate to yield maleylacetoacetate.</text>
</comment>
<comment type="catalytic activity">
    <reaction evidence="1">
        <text>homogentisate + O2 = 4-maleylacetoacetate + H(+)</text>
        <dbReference type="Rhea" id="RHEA:15449"/>
        <dbReference type="ChEBI" id="CHEBI:15378"/>
        <dbReference type="ChEBI" id="CHEBI:15379"/>
        <dbReference type="ChEBI" id="CHEBI:16169"/>
        <dbReference type="ChEBI" id="CHEBI:17105"/>
        <dbReference type="EC" id="1.13.11.5"/>
    </reaction>
</comment>
<comment type="cofactor">
    <cofactor evidence="1">
        <name>Fe cation</name>
        <dbReference type="ChEBI" id="CHEBI:24875"/>
    </cofactor>
</comment>
<comment type="pathway">
    <text evidence="1">Amino-acid degradation; L-phenylalanine degradation; acetoacetate and fumarate from L-phenylalanine: step 4/6.</text>
</comment>
<comment type="subunit">
    <text evidence="1">Hexamer; dimer of trimers.</text>
</comment>
<comment type="similarity">
    <text evidence="1">Belongs to the homogentisate dioxygenase family.</text>
</comment>
<name>HGD_CUPNH</name>
<keyword id="KW-0223">Dioxygenase</keyword>
<keyword id="KW-0408">Iron</keyword>
<keyword id="KW-0479">Metal-binding</keyword>
<keyword id="KW-0560">Oxidoreductase</keyword>
<keyword id="KW-0585">Phenylalanine catabolism</keyword>
<keyword id="KW-1185">Reference proteome</keyword>
<keyword id="KW-0828">Tyrosine catabolism</keyword>
<feature type="chain" id="PRO_1000019537" description="Homogentisate 1,2-dioxygenase">
    <location>
        <begin position="1"/>
        <end position="439"/>
    </location>
</feature>
<feature type="active site" description="Proton acceptor" evidence="1">
    <location>
        <position position="293"/>
    </location>
</feature>
<feature type="binding site" evidence="1">
    <location>
        <position position="336"/>
    </location>
    <ligand>
        <name>Fe cation</name>
        <dbReference type="ChEBI" id="CHEBI:24875"/>
    </ligand>
</feature>
<feature type="binding site" evidence="1">
    <location>
        <position position="342"/>
    </location>
    <ligand>
        <name>Fe cation</name>
        <dbReference type="ChEBI" id="CHEBI:24875"/>
    </ligand>
</feature>
<feature type="binding site" evidence="1">
    <location>
        <position position="351"/>
    </location>
    <ligand>
        <name>homogentisate</name>
        <dbReference type="ChEBI" id="CHEBI:16169"/>
    </ligand>
</feature>
<feature type="binding site" evidence="1">
    <location>
        <position position="372"/>
    </location>
    <ligand>
        <name>Fe cation</name>
        <dbReference type="ChEBI" id="CHEBI:24875"/>
    </ligand>
</feature>
<feature type="binding site" evidence="1">
    <location>
        <position position="372"/>
    </location>
    <ligand>
        <name>homogentisate</name>
        <dbReference type="ChEBI" id="CHEBI:16169"/>
    </ligand>
</feature>
<gene>
    <name evidence="1" type="primary">hmgA</name>
    <name type="ordered locus">H16_B1671</name>
</gene>
<evidence type="ECO:0000255" key="1">
    <source>
        <dbReference type="HAMAP-Rule" id="MF_00334"/>
    </source>
</evidence>
<sequence length="439" mass="48708">MTLTHTQLAEHGYMSGFANEFATEALPGALPVGRNSPQCAPYGLYAEQLSGTAFTAPRAHNRRSWLYRIRPAAMHTPFTQIEQSRFLSRFDQVPPSPNQMRWSPPAMPSVPTDFVDGIVTMAGNGGPEAMTGCGIHLYLANQSMQDRFFYNADGEMLIVPQQGRLLMVTELGRLEVEPQEIVVIPRGVRFRVELPDGEARGYICENYGALFQLPDLGVIGSNGLANPRDFLSPVASYEDREGDFELVAKFQGNLWRAGIGHSPLDVVAWHGNYTPYKYDLRRFNTIGSISFDHPDPSIFLVLQSPSATPGVDTIDFVIFGPRWLAMQDSFRPPWFHRNIASEFMGLITGVYDAKAEGFAPGGASLHNCMSGHGPDAETFEKASAADTSKPHRIEDTMAFMFETPGVIRPTPYAAQSASLQQDYYTCWQGLKKHFNPNTR</sequence>
<organism>
    <name type="scientific">Cupriavidus necator (strain ATCC 17699 / DSM 428 / KCTC 22496 / NCIMB 10442 / H16 / Stanier 337)</name>
    <name type="common">Ralstonia eutropha</name>
    <dbReference type="NCBI Taxonomy" id="381666"/>
    <lineage>
        <taxon>Bacteria</taxon>
        <taxon>Pseudomonadati</taxon>
        <taxon>Pseudomonadota</taxon>
        <taxon>Betaproteobacteria</taxon>
        <taxon>Burkholderiales</taxon>
        <taxon>Burkholderiaceae</taxon>
        <taxon>Cupriavidus</taxon>
    </lineage>
</organism>
<accession>Q0K0L8</accession>
<reference key="1">
    <citation type="journal article" date="2006" name="Nat. Biotechnol.">
        <title>Genome sequence of the bioplastic-producing 'Knallgas' bacterium Ralstonia eutropha H16.</title>
        <authorList>
            <person name="Pohlmann A."/>
            <person name="Fricke W.F."/>
            <person name="Reinecke F."/>
            <person name="Kusian B."/>
            <person name="Liesegang H."/>
            <person name="Cramm R."/>
            <person name="Eitinger T."/>
            <person name="Ewering C."/>
            <person name="Poetter M."/>
            <person name="Schwartz E."/>
            <person name="Strittmatter A."/>
            <person name="Voss I."/>
            <person name="Gottschalk G."/>
            <person name="Steinbuechel A."/>
            <person name="Friedrich B."/>
            <person name="Bowien B."/>
        </authorList>
    </citation>
    <scope>NUCLEOTIDE SEQUENCE [LARGE SCALE GENOMIC DNA]</scope>
    <source>
        <strain>ATCC 17699 / DSM 428 / KCTC 22496 / NCIMB 10442 / H16 / Stanier 337</strain>
    </source>
</reference>
<proteinExistence type="inferred from homology"/>